<feature type="chain" id="PRO_0000292310" description="Pyridoxine/pyridoxamine 5'-phosphate oxidase">
    <location>
        <begin position="1"/>
        <end position="210"/>
    </location>
</feature>
<feature type="binding site" evidence="1">
    <location>
        <begin position="7"/>
        <end position="10"/>
    </location>
    <ligand>
        <name>substrate</name>
    </ligand>
</feature>
<feature type="binding site" evidence="1">
    <location>
        <begin position="60"/>
        <end position="65"/>
    </location>
    <ligand>
        <name>FMN</name>
        <dbReference type="ChEBI" id="CHEBI:58210"/>
    </ligand>
</feature>
<feature type="binding site" evidence="1">
    <location>
        <position position="65"/>
    </location>
    <ligand>
        <name>substrate</name>
    </ligand>
</feature>
<feature type="binding site" evidence="1">
    <location>
        <begin position="75"/>
        <end position="76"/>
    </location>
    <ligand>
        <name>FMN</name>
        <dbReference type="ChEBI" id="CHEBI:58210"/>
    </ligand>
</feature>
<feature type="binding site" evidence="1">
    <location>
        <position position="81"/>
    </location>
    <ligand>
        <name>FMN</name>
        <dbReference type="ChEBI" id="CHEBI:58210"/>
    </ligand>
</feature>
<feature type="binding site" evidence="1">
    <location>
        <position position="82"/>
    </location>
    <ligand>
        <name>FMN</name>
        <dbReference type="ChEBI" id="CHEBI:58210"/>
    </ligand>
</feature>
<feature type="binding site" evidence="1">
    <location>
        <position position="104"/>
    </location>
    <ligand>
        <name>FMN</name>
        <dbReference type="ChEBI" id="CHEBI:58210"/>
    </ligand>
</feature>
<feature type="binding site" evidence="1">
    <location>
        <position position="122"/>
    </location>
    <ligand>
        <name>substrate</name>
    </ligand>
</feature>
<feature type="binding site" evidence="1">
    <location>
        <position position="126"/>
    </location>
    <ligand>
        <name>substrate</name>
    </ligand>
</feature>
<feature type="binding site" evidence="1">
    <location>
        <position position="130"/>
    </location>
    <ligand>
        <name>substrate</name>
    </ligand>
</feature>
<feature type="binding site" evidence="1">
    <location>
        <begin position="139"/>
        <end position="140"/>
    </location>
    <ligand>
        <name>FMN</name>
        <dbReference type="ChEBI" id="CHEBI:58210"/>
    </ligand>
</feature>
<feature type="binding site" evidence="1">
    <location>
        <position position="183"/>
    </location>
    <ligand>
        <name>FMN</name>
        <dbReference type="ChEBI" id="CHEBI:58210"/>
    </ligand>
</feature>
<feature type="binding site" evidence="1">
    <location>
        <begin position="189"/>
        <end position="191"/>
    </location>
    <ligand>
        <name>substrate</name>
    </ligand>
</feature>
<feature type="binding site" evidence="1">
    <location>
        <position position="193"/>
    </location>
    <ligand>
        <name>FMN</name>
        <dbReference type="ChEBI" id="CHEBI:58210"/>
    </ligand>
</feature>
<accession>A1KUI2</accession>
<reference key="1">
    <citation type="journal article" date="2007" name="PLoS Genet.">
        <title>Meningococcal genetic variation mechanisms viewed through comparative analysis of serogroup C strain FAM18.</title>
        <authorList>
            <person name="Bentley S.D."/>
            <person name="Vernikos G.S."/>
            <person name="Snyder L.A.S."/>
            <person name="Churcher C."/>
            <person name="Arrowsmith C."/>
            <person name="Chillingworth T."/>
            <person name="Cronin A."/>
            <person name="Davis P.H."/>
            <person name="Holroyd N.E."/>
            <person name="Jagels K."/>
            <person name="Maddison M."/>
            <person name="Moule S."/>
            <person name="Rabbinowitsch E."/>
            <person name="Sharp S."/>
            <person name="Unwin L."/>
            <person name="Whitehead S."/>
            <person name="Quail M.A."/>
            <person name="Achtman M."/>
            <person name="Barrell B.G."/>
            <person name="Saunders N.J."/>
            <person name="Parkhill J."/>
        </authorList>
    </citation>
    <scope>NUCLEOTIDE SEQUENCE [LARGE SCALE GENOMIC DNA]</scope>
    <source>
        <strain>ATCC 700532 / DSM 15464 / FAM18</strain>
    </source>
</reference>
<keyword id="KW-0285">Flavoprotein</keyword>
<keyword id="KW-0288">FMN</keyword>
<keyword id="KW-0560">Oxidoreductase</keyword>
<keyword id="KW-0664">Pyridoxine biosynthesis</keyword>
<gene>
    <name evidence="1" type="primary">pdxH</name>
    <name type="ordered locus">NMC1295</name>
</gene>
<evidence type="ECO:0000255" key="1">
    <source>
        <dbReference type="HAMAP-Rule" id="MF_01629"/>
    </source>
</evidence>
<dbReference type="EC" id="1.4.3.5" evidence="1"/>
<dbReference type="EMBL" id="AM421808">
    <property type="protein sequence ID" value="CAM10525.1"/>
    <property type="molecule type" value="Genomic_DNA"/>
</dbReference>
<dbReference type="RefSeq" id="WP_002219133.1">
    <property type="nucleotide sequence ID" value="NC_008767.1"/>
</dbReference>
<dbReference type="SMR" id="A1KUI2"/>
<dbReference type="GeneID" id="93388004"/>
<dbReference type="KEGG" id="nmc:NMC1295"/>
<dbReference type="HOGENOM" id="CLU_032263_2_2_4"/>
<dbReference type="UniPathway" id="UPA01068">
    <property type="reaction ID" value="UER00304"/>
</dbReference>
<dbReference type="UniPathway" id="UPA01068">
    <property type="reaction ID" value="UER00305"/>
</dbReference>
<dbReference type="Proteomes" id="UP000002286">
    <property type="component" value="Chromosome"/>
</dbReference>
<dbReference type="GO" id="GO:0010181">
    <property type="term" value="F:FMN binding"/>
    <property type="evidence" value="ECO:0007669"/>
    <property type="project" value="UniProtKB-UniRule"/>
</dbReference>
<dbReference type="GO" id="GO:0004733">
    <property type="term" value="F:pyridoxamine phosphate oxidase activity"/>
    <property type="evidence" value="ECO:0007669"/>
    <property type="project" value="UniProtKB-UniRule"/>
</dbReference>
<dbReference type="GO" id="GO:0008615">
    <property type="term" value="P:pyridoxine biosynthetic process"/>
    <property type="evidence" value="ECO:0007669"/>
    <property type="project" value="UniProtKB-KW"/>
</dbReference>
<dbReference type="FunFam" id="2.30.110.10:FF:000014">
    <property type="entry name" value="Pyridoxine/pyridoxamine 5'-phosphate oxidase"/>
    <property type="match status" value="1"/>
</dbReference>
<dbReference type="Gene3D" id="2.30.110.10">
    <property type="entry name" value="Electron Transport, Fmn-binding Protein, Chain A"/>
    <property type="match status" value="1"/>
</dbReference>
<dbReference type="HAMAP" id="MF_01629">
    <property type="entry name" value="PdxH"/>
    <property type="match status" value="1"/>
</dbReference>
<dbReference type="InterPro" id="IPR000659">
    <property type="entry name" value="Pyridox_Oxase"/>
</dbReference>
<dbReference type="InterPro" id="IPR019740">
    <property type="entry name" value="Pyridox_Oxase_CS"/>
</dbReference>
<dbReference type="InterPro" id="IPR011576">
    <property type="entry name" value="Pyridox_Oxase_N"/>
</dbReference>
<dbReference type="InterPro" id="IPR019576">
    <property type="entry name" value="Pyridoxamine_oxidase_dimer_C"/>
</dbReference>
<dbReference type="InterPro" id="IPR012349">
    <property type="entry name" value="Split_barrel_FMN-bd"/>
</dbReference>
<dbReference type="NCBIfam" id="TIGR00558">
    <property type="entry name" value="pdxH"/>
    <property type="match status" value="1"/>
</dbReference>
<dbReference type="NCBIfam" id="NF004231">
    <property type="entry name" value="PRK05679.1"/>
    <property type="match status" value="1"/>
</dbReference>
<dbReference type="PANTHER" id="PTHR10851:SF0">
    <property type="entry name" value="PYRIDOXINE-5'-PHOSPHATE OXIDASE"/>
    <property type="match status" value="1"/>
</dbReference>
<dbReference type="PANTHER" id="PTHR10851">
    <property type="entry name" value="PYRIDOXINE-5-PHOSPHATE OXIDASE"/>
    <property type="match status" value="1"/>
</dbReference>
<dbReference type="Pfam" id="PF10590">
    <property type="entry name" value="PNP_phzG_C"/>
    <property type="match status" value="1"/>
</dbReference>
<dbReference type="Pfam" id="PF01243">
    <property type="entry name" value="PNPOx_N"/>
    <property type="match status" value="1"/>
</dbReference>
<dbReference type="PIRSF" id="PIRSF000190">
    <property type="entry name" value="Pyd_amn-ph_oxd"/>
    <property type="match status" value="1"/>
</dbReference>
<dbReference type="SUPFAM" id="SSF50475">
    <property type="entry name" value="FMN-binding split barrel"/>
    <property type="match status" value="1"/>
</dbReference>
<dbReference type="PROSITE" id="PS01064">
    <property type="entry name" value="PYRIDOX_OXIDASE"/>
    <property type="match status" value="1"/>
</dbReference>
<name>PDXH_NEIMF</name>
<protein>
    <recommendedName>
        <fullName evidence="1">Pyridoxine/pyridoxamine 5'-phosphate oxidase</fullName>
        <ecNumber evidence="1">1.4.3.5</ecNumber>
    </recommendedName>
    <alternativeName>
        <fullName evidence="1">PNP/PMP oxidase</fullName>
        <shortName evidence="1">PNPOx</shortName>
    </alternativeName>
    <alternativeName>
        <fullName evidence="1">Pyridoxal 5'-phosphate synthase</fullName>
    </alternativeName>
</protein>
<organism>
    <name type="scientific">Neisseria meningitidis serogroup C / serotype 2a (strain ATCC 700532 / DSM 15464 / FAM18)</name>
    <dbReference type="NCBI Taxonomy" id="272831"/>
    <lineage>
        <taxon>Bacteria</taxon>
        <taxon>Pseudomonadati</taxon>
        <taxon>Pseudomonadota</taxon>
        <taxon>Betaproteobacteria</taxon>
        <taxon>Neisseriales</taxon>
        <taxon>Neisseriaceae</taxon>
        <taxon>Neisseria</taxon>
    </lineage>
</organism>
<proteinExistence type="inferred from homology"/>
<sequence>MDLHNIREDYSKRELSEGDCADNPIEQFERWLDEAVRAQVNEPTAVNVAAVDGRGRPNSRMVLLKEVNSEGFVFFTNYHSRKGRSLDAHPFAAMTFFWPELERQVRVEGRVERLAEKLSDEYFESRPYQSRLGAWASAQSEVIPNKAVLVAKAAAVGLKHPLHVPRPPHWGGYIVIPDLIEFWQGRPSRLHDRIQYRLLDGGWIRERLSP</sequence>
<comment type="function">
    <text evidence="1">Catalyzes the oxidation of either pyridoxine 5'-phosphate (PNP) or pyridoxamine 5'-phosphate (PMP) into pyridoxal 5'-phosphate (PLP).</text>
</comment>
<comment type="catalytic activity">
    <reaction evidence="1">
        <text>pyridoxamine 5'-phosphate + O2 + H2O = pyridoxal 5'-phosphate + H2O2 + NH4(+)</text>
        <dbReference type="Rhea" id="RHEA:15817"/>
        <dbReference type="ChEBI" id="CHEBI:15377"/>
        <dbReference type="ChEBI" id="CHEBI:15379"/>
        <dbReference type="ChEBI" id="CHEBI:16240"/>
        <dbReference type="ChEBI" id="CHEBI:28938"/>
        <dbReference type="ChEBI" id="CHEBI:58451"/>
        <dbReference type="ChEBI" id="CHEBI:597326"/>
        <dbReference type="EC" id="1.4.3.5"/>
    </reaction>
</comment>
<comment type="catalytic activity">
    <reaction evidence="1">
        <text>pyridoxine 5'-phosphate + O2 = pyridoxal 5'-phosphate + H2O2</text>
        <dbReference type="Rhea" id="RHEA:15149"/>
        <dbReference type="ChEBI" id="CHEBI:15379"/>
        <dbReference type="ChEBI" id="CHEBI:16240"/>
        <dbReference type="ChEBI" id="CHEBI:58589"/>
        <dbReference type="ChEBI" id="CHEBI:597326"/>
        <dbReference type="EC" id="1.4.3.5"/>
    </reaction>
</comment>
<comment type="cofactor">
    <cofactor evidence="1">
        <name>FMN</name>
        <dbReference type="ChEBI" id="CHEBI:58210"/>
    </cofactor>
    <text evidence="1">Binds 1 FMN per subunit.</text>
</comment>
<comment type="pathway">
    <text evidence="1">Cofactor metabolism; pyridoxal 5'-phosphate salvage; pyridoxal 5'-phosphate from pyridoxamine 5'-phosphate: step 1/1.</text>
</comment>
<comment type="pathway">
    <text evidence="1">Cofactor metabolism; pyridoxal 5'-phosphate salvage; pyridoxal 5'-phosphate from pyridoxine 5'-phosphate: step 1/1.</text>
</comment>
<comment type="subunit">
    <text evidence="1">Homodimer.</text>
</comment>
<comment type="similarity">
    <text evidence="1">Belongs to the pyridoxamine 5'-phosphate oxidase family.</text>
</comment>